<name>SURE_SHEB2</name>
<organism>
    <name type="scientific">Shewanella baltica (strain OS223)</name>
    <dbReference type="NCBI Taxonomy" id="407976"/>
    <lineage>
        <taxon>Bacteria</taxon>
        <taxon>Pseudomonadati</taxon>
        <taxon>Pseudomonadota</taxon>
        <taxon>Gammaproteobacteria</taxon>
        <taxon>Alteromonadales</taxon>
        <taxon>Shewanellaceae</taxon>
        <taxon>Shewanella</taxon>
    </lineage>
</organism>
<comment type="function">
    <text evidence="1">Nucleotidase that shows phosphatase activity on nucleoside 5'-monophosphates.</text>
</comment>
<comment type="catalytic activity">
    <reaction evidence="1">
        <text>a ribonucleoside 5'-phosphate + H2O = a ribonucleoside + phosphate</text>
        <dbReference type="Rhea" id="RHEA:12484"/>
        <dbReference type="ChEBI" id="CHEBI:15377"/>
        <dbReference type="ChEBI" id="CHEBI:18254"/>
        <dbReference type="ChEBI" id="CHEBI:43474"/>
        <dbReference type="ChEBI" id="CHEBI:58043"/>
        <dbReference type="EC" id="3.1.3.5"/>
    </reaction>
</comment>
<comment type="cofactor">
    <cofactor evidence="1">
        <name>a divalent metal cation</name>
        <dbReference type="ChEBI" id="CHEBI:60240"/>
    </cofactor>
    <text evidence="1">Binds 1 divalent metal cation per subunit.</text>
</comment>
<comment type="subcellular location">
    <subcellularLocation>
        <location evidence="1">Cytoplasm</location>
    </subcellularLocation>
</comment>
<comment type="similarity">
    <text evidence="1">Belongs to the SurE nucleotidase family.</text>
</comment>
<evidence type="ECO:0000255" key="1">
    <source>
        <dbReference type="HAMAP-Rule" id="MF_00060"/>
    </source>
</evidence>
<keyword id="KW-0963">Cytoplasm</keyword>
<keyword id="KW-0378">Hydrolase</keyword>
<keyword id="KW-0479">Metal-binding</keyword>
<keyword id="KW-0547">Nucleotide-binding</keyword>
<reference key="1">
    <citation type="submission" date="2008-12" db="EMBL/GenBank/DDBJ databases">
        <title>Complete sequence of chromosome of Shewanella baltica OS223.</title>
        <authorList>
            <consortium name="US DOE Joint Genome Institute"/>
            <person name="Lucas S."/>
            <person name="Copeland A."/>
            <person name="Lapidus A."/>
            <person name="Glavina del Rio T."/>
            <person name="Dalin E."/>
            <person name="Tice H."/>
            <person name="Bruce D."/>
            <person name="Goodwin L."/>
            <person name="Pitluck S."/>
            <person name="Chertkov O."/>
            <person name="Meincke L."/>
            <person name="Brettin T."/>
            <person name="Detter J.C."/>
            <person name="Han C."/>
            <person name="Kuske C.R."/>
            <person name="Larimer F."/>
            <person name="Land M."/>
            <person name="Hauser L."/>
            <person name="Kyrpides N."/>
            <person name="Ovchinnikova G."/>
            <person name="Brettar I."/>
            <person name="Rodrigues J."/>
            <person name="Konstantinidis K."/>
            <person name="Tiedje J."/>
        </authorList>
    </citation>
    <scope>NUCLEOTIDE SEQUENCE [LARGE SCALE GENOMIC DNA]</scope>
    <source>
        <strain>OS223</strain>
    </source>
</reference>
<feature type="chain" id="PRO_1000196615" description="5'-nucleotidase SurE">
    <location>
        <begin position="1"/>
        <end position="249"/>
    </location>
</feature>
<feature type="binding site" evidence="1">
    <location>
        <position position="9"/>
    </location>
    <ligand>
        <name>a divalent metal cation</name>
        <dbReference type="ChEBI" id="CHEBI:60240"/>
    </ligand>
</feature>
<feature type="binding site" evidence="1">
    <location>
        <position position="10"/>
    </location>
    <ligand>
        <name>a divalent metal cation</name>
        <dbReference type="ChEBI" id="CHEBI:60240"/>
    </ligand>
</feature>
<feature type="binding site" evidence="1">
    <location>
        <position position="40"/>
    </location>
    <ligand>
        <name>a divalent metal cation</name>
        <dbReference type="ChEBI" id="CHEBI:60240"/>
    </ligand>
</feature>
<feature type="binding site" evidence="1">
    <location>
        <position position="92"/>
    </location>
    <ligand>
        <name>a divalent metal cation</name>
        <dbReference type="ChEBI" id="CHEBI:60240"/>
    </ligand>
</feature>
<sequence>MIRILVSNDDGVNAPGIKALTEALTEIATVLTVGPDRNCSGASNSLTLTNPLRINRLDNGYISVHGTPTDCVHLAIRELYDGEPDMVVSGINAGANMGDDTLYSGTVAAAMEGRFLGFPAVAISLNGRKFEHYQSAAVYARRIVQGLLAQPLAKDQILNVNVPDLPLDQIKGIKVTRLGARHKAEGIVRTQDPAGREIFWLGPPGQEQDATEGTDFHAIANGYVSITPLTVDLTAYGQLTALQNWVDKI</sequence>
<gene>
    <name evidence="1" type="primary">surE</name>
    <name type="ordered locus">Sbal223_1242</name>
</gene>
<accession>B8E8T6</accession>
<dbReference type="EC" id="3.1.3.5" evidence="1"/>
<dbReference type="EMBL" id="CP001252">
    <property type="protein sequence ID" value="ACK45752.1"/>
    <property type="molecule type" value="Genomic_DNA"/>
</dbReference>
<dbReference type="RefSeq" id="WP_006086855.1">
    <property type="nucleotide sequence ID" value="NC_011663.1"/>
</dbReference>
<dbReference type="SMR" id="B8E8T6"/>
<dbReference type="KEGG" id="sbp:Sbal223_1242"/>
<dbReference type="HOGENOM" id="CLU_045192_1_2_6"/>
<dbReference type="Proteomes" id="UP000002507">
    <property type="component" value="Chromosome"/>
</dbReference>
<dbReference type="GO" id="GO:0005737">
    <property type="term" value="C:cytoplasm"/>
    <property type="evidence" value="ECO:0007669"/>
    <property type="project" value="UniProtKB-SubCell"/>
</dbReference>
<dbReference type="GO" id="GO:0008254">
    <property type="term" value="F:3'-nucleotidase activity"/>
    <property type="evidence" value="ECO:0007669"/>
    <property type="project" value="TreeGrafter"/>
</dbReference>
<dbReference type="GO" id="GO:0008253">
    <property type="term" value="F:5'-nucleotidase activity"/>
    <property type="evidence" value="ECO:0007669"/>
    <property type="project" value="UniProtKB-UniRule"/>
</dbReference>
<dbReference type="GO" id="GO:0004309">
    <property type="term" value="F:exopolyphosphatase activity"/>
    <property type="evidence" value="ECO:0007669"/>
    <property type="project" value="TreeGrafter"/>
</dbReference>
<dbReference type="GO" id="GO:0046872">
    <property type="term" value="F:metal ion binding"/>
    <property type="evidence" value="ECO:0007669"/>
    <property type="project" value="UniProtKB-UniRule"/>
</dbReference>
<dbReference type="GO" id="GO:0000166">
    <property type="term" value="F:nucleotide binding"/>
    <property type="evidence" value="ECO:0007669"/>
    <property type="project" value="UniProtKB-KW"/>
</dbReference>
<dbReference type="FunFam" id="3.40.1210.10:FF:000001">
    <property type="entry name" value="5'/3'-nucleotidase SurE"/>
    <property type="match status" value="1"/>
</dbReference>
<dbReference type="Gene3D" id="3.40.1210.10">
    <property type="entry name" value="Survival protein SurE-like phosphatase/nucleotidase"/>
    <property type="match status" value="1"/>
</dbReference>
<dbReference type="HAMAP" id="MF_00060">
    <property type="entry name" value="SurE"/>
    <property type="match status" value="1"/>
</dbReference>
<dbReference type="InterPro" id="IPR030048">
    <property type="entry name" value="SurE"/>
</dbReference>
<dbReference type="InterPro" id="IPR002828">
    <property type="entry name" value="SurE-like_Pase/nucleotidase"/>
</dbReference>
<dbReference type="InterPro" id="IPR036523">
    <property type="entry name" value="SurE-like_sf"/>
</dbReference>
<dbReference type="NCBIfam" id="NF001489">
    <property type="entry name" value="PRK00346.1-3"/>
    <property type="match status" value="1"/>
</dbReference>
<dbReference type="NCBIfam" id="NF001490">
    <property type="entry name" value="PRK00346.1-4"/>
    <property type="match status" value="1"/>
</dbReference>
<dbReference type="NCBIfam" id="TIGR00087">
    <property type="entry name" value="surE"/>
    <property type="match status" value="1"/>
</dbReference>
<dbReference type="PANTHER" id="PTHR30457">
    <property type="entry name" value="5'-NUCLEOTIDASE SURE"/>
    <property type="match status" value="1"/>
</dbReference>
<dbReference type="PANTHER" id="PTHR30457:SF12">
    <property type="entry name" value="5'_3'-NUCLEOTIDASE SURE"/>
    <property type="match status" value="1"/>
</dbReference>
<dbReference type="Pfam" id="PF01975">
    <property type="entry name" value="SurE"/>
    <property type="match status" value="1"/>
</dbReference>
<dbReference type="SUPFAM" id="SSF64167">
    <property type="entry name" value="SurE-like"/>
    <property type="match status" value="1"/>
</dbReference>
<protein>
    <recommendedName>
        <fullName evidence="1">5'-nucleotidase SurE</fullName>
        <ecNumber evidence="1">3.1.3.5</ecNumber>
    </recommendedName>
    <alternativeName>
        <fullName evidence="1">Nucleoside 5'-monophosphate phosphohydrolase</fullName>
    </alternativeName>
</protein>
<proteinExistence type="inferred from homology"/>